<reference key="1">
    <citation type="journal article" date="2010" name="Genome Biol. Evol.">
        <title>Continuing evolution of Burkholderia mallei through genome reduction and large-scale rearrangements.</title>
        <authorList>
            <person name="Losada L."/>
            <person name="Ronning C.M."/>
            <person name="DeShazer D."/>
            <person name="Woods D."/>
            <person name="Fedorova N."/>
            <person name="Kim H.S."/>
            <person name="Shabalina S.A."/>
            <person name="Pearson T.R."/>
            <person name="Brinkac L."/>
            <person name="Tan P."/>
            <person name="Nandi T."/>
            <person name="Crabtree J."/>
            <person name="Badger J."/>
            <person name="Beckstrom-Sternberg S."/>
            <person name="Saqib M."/>
            <person name="Schutzer S.E."/>
            <person name="Keim P."/>
            <person name="Nierman W.C."/>
        </authorList>
    </citation>
    <scope>NUCLEOTIDE SEQUENCE [LARGE SCALE GENOMIC DNA]</scope>
    <source>
        <strain>1106a</strain>
    </source>
</reference>
<gene>
    <name evidence="1" type="primary">rph</name>
    <name type="ordered locus">BURPS1106A_3017</name>
</gene>
<comment type="function">
    <text evidence="1">Phosphorolytic 3'-5' exoribonuclease that plays an important role in tRNA 3'-end maturation. Removes nucleotide residues following the 3'-CCA terminus of tRNAs; can also add nucleotides to the ends of RNA molecules by using nucleoside diphosphates as substrates, but this may not be physiologically important. Probably plays a role in initiation of 16S rRNA degradation (leading to ribosome degradation) during starvation.</text>
</comment>
<comment type="catalytic activity">
    <reaction evidence="1">
        <text>tRNA(n+1) + phosphate = tRNA(n) + a ribonucleoside 5'-diphosphate</text>
        <dbReference type="Rhea" id="RHEA:10628"/>
        <dbReference type="Rhea" id="RHEA-COMP:17343"/>
        <dbReference type="Rhea" id="RHEA-COMP:17344"/>
        <dbReference type="ChEBI" id="CHEBI:43474"/>
        <dbReference type="ChEBI" id="CHEBI:57930"/>
        <dbReference type="ChEBI" id="CHEBI:173114"/>
        <dbReference type="EC" id="2.7.7.56"/>
    </reaction>
</comment>
<comment type="subunit">
    <text evidence="1">Homohexameric ring arranged as a trimer of dimers.</text>
</comment>
<comment type="similarity">
    <text evidence="1">Belongs to the RNase PH family.</text>
</comment>
<name>RNPH_BURP0</name>
<sequence>MTNSSLRPSGRRADQLRDVRITRHYTKHAEGAVLVEFGDTKVICTASVAERVPEFLRERGQGWLTAEYGMLPRATHTRSDREAARGKQTGRTQEIQRLIGRALRAVFDLNALGPRTLHLDCDVIQADGGTRTASITGAFVAAHDAVTKLVAAGRIARSPITDYVAAISVGVFGGTPVLDLDYDEDSACDTDMNVVMTGAGGFVEVQGTAEGAPFSRTEMNALLDLAQAGIGELVRLQRAALEA</sequence>
<evidence type="ECO:0000255" key="1">
    <source>
        <dbReference type="HAMAP-Rule" id="MF_00564"/>
    </source>
</evidence>
<keyword id="KW-0548">Nucleotidyltransferase</keyword>
<keyword id="KW-0694">RNA-binding</keyword>
<keyword id="KW-0698">rRNA processing</keyword>
<keyword id="KW-0808">Transferase</keyword>
<keyword id="KW-0819">tRNA processing</keyword>
<keyword id="KW-0820">tRNA-binding</keyword>
<proteinExistence type="inferred from homology"/>
<accession>A3NY37</accession>
<feature type="chain" id="PRO_1000024788" description="Ribonuclease PH">
    <location>
        <begin position="1"/>
        <end position="243"/>
    </location>
</feature>
<feature type="binding site" evidence="1">
    <location>
        <position position="91"/>
    </location>
    <ligand>
        <name>phosphate</name>
        <dbReference type="ChEBI" id="CHEBI:43474"/>
        <note>substrate</note>
    </ligand>
</feature>
<feature type="binding site" evidence="1">
    <location>
        <begin position="129"/>
        <end position="131"/>
    </location>
    <ligand>
        <name>phosphate</name>
        <dbReference type="ChEBI" id="CHEBI:43474"/>
        <note>substrate</note>
    </ligand>
</feature>
<organism>
    <name type="scientific">Burkholderia pseudomallei (strain 1106a)</name>
    <dbReference type="NCBI Taxonomy" id="357348"/>
    <lineage>
        <taxon>Bacteria</taxon>
        <taxon>Pseudomonadati</taxon>
        <taxon>Pseudomonadota</taxon>
        <taxon>Betaproteobacteria</taxon>
        <taxon>Burkholderiales</taxon>
        <taxon>Burkholderiaceae</taxon>
        <taxon>Burkholderia</taxon>
        <taxon>pseudomallei group</taxon>
    </lineage>
</organism>
<protein>
    <recommendedName>
        <fullName evidence="1">Ribonuclease PH</fullName>
        <shortName evidence="1">RNase PH</shortName>
        <ecNumber evidence="1">2.7.7.56</ecNumber>
    </recommendedName>
    <alternativeName>
        <fullName evidence="1">tRNA nucleotidyltransferase</fullName>
    </alternativeName>
</protein>
<dbReference type="EC" id="2.7.7.56" evidence="1"/>
<dbReference type="EMBL" id="CP000572">
    <property type="protein sequence ID" value="ABN91374.1"/>
    <property type="molecule type" value="Genomic_DNA"/>
</dbReference>
<dbReference type="RefSeq" id="WP_004186400.1">
    <property type="nucleotide sequence ID" value="NC_009076.1"/>
</dbReference>
<dbReference type="SMR" id="A3NY37"/>
<dbReference type="GeneID" id="93061158"/>
<dbReference type="KEGG" id="bpl:BURPS1106A_3017"/>
<dbReference type="HOGENOM" id="CLU_050858_0_0_4"/>
<dbReference type="Proteomes" id="UP000006738">
    <property type="component" value="Chromosome I"/>
</dbReference>
<dbReference type="GO" id="GO:0000175">
    <property type="term" value="F:3'-5'-RNA exonuclease activity"/>
    <property type="evidence" value="ECO:0007669"/>
    <property type="project" value="UniProtKB-UniRule"/>
</dbReference>
<dbReference type="GO" id="GO:0000049">
    <property type="term" value="F:tRNA binding"/>
    <property type="evidence" value="ECO:0007669"/>
    <property type="project" value="UniProtKB-UniRule"/>
</dbReference>
<dbReference type="GO" id="GO:0009022">
    <property type="term" value="F:tRNA nucleotidyltransferase activity"/>
    <property type="evidence" value="ECO:0007669"/>
    <property type="project" value="UniProtKB-UniRule"/>
</dbReference>
<dbReference type="GO" id="GO:0016075">
    <property type="term" value="P:rRNA catabolic process"/>
    <property type="evidence" value="ECO:0007669"/>
    <property type="project" value="UniProtKB-UniRule"/>
</dbReference>
<dbReference type="GO" id="GO:0006364">
    <property type="term" value="P:rRNA processing"/>
    <property type="evidence" value="ECO:0007669"/>
    <property type="project" value="UniProtKB-KW"/>
</dbReference>
<dbReference type="GO" id="GO:0008033">
    <property type="term" value="P:tRNA processing"/>
    <property type="evidence" value="ECO:0007669"/>
    <property type="project" value="UniProtKB-UniRule"/>
</dbReference>
<dbReference type="CDD" id="cd11362">
    <property type="entry name" value="RNase_PH_bact"/>
    <property type="match status" value="1"/>
</dbReference>
<dbReference type="FunFam" id="3.30.230.70:FF:000003">
    <property type="entry name" value="Ribonuclease PH"/>
    <property type="match status" value="1"/>
</dbReference>
<dbReference type="Gene3D" id="3.30.230.70">
    <property type="entry name" value="GHMP Kinase, N-terminal domain"/>
    <property type="match status" value="1"/>
</dbReference>
<dbReference type="HAMAP" id="MF_00564">
    <property type="entry name" value="RNase_PH"/>
    <property type="match status" value="1"/>
</dbReference>
<dbReference type="InterPro" id="IPR001247">
    <property type="entry name" value="ExoRNase_PH_dom1"/>
</dbReference>
<dbReference type="InterPro" id="IPR015847">
    <property type="entry name" value="ExoRNase_PH_dom2"/>
</dbReference>
<dbReference type="InterPro" id="IPR036345">
    <property type="entry name" value="ExoRNase_PH_dom2_sf"/>
</dbReference>
<dbReference type="InterPro" id="IPR027408">
    <property type="entry name" value="PNPase/RNase_PH_dom_sf"/>
</dbReference>
<dbReference type="InterPro" id="IPR020568">
    <property type="entry name" value="Ribosomal_Su5_D2-typ_SF"/>
</dbReference>
<dbReference type="InterPro" id="IPR050080">
    <property type="entry name" value="RNase_PH"/>
</dbReference>
<dbReference type="InterPro" id="IPR002381">
    <property type="entry name" value="RNase_PH_bac-type"/>
</dbReference>
<dbReference type="InterPro" id="IPR018336">
    <property type="entry name" value="RNase_PH_CS"/>
</dbReference>
<dbReference type="NCBIfam" id="TIGR01966">
    <property type="entry name" value="RNasePH"/>
    <property type="match status" value="1"/>
</dbReference>
<dbReference type="PANTHER" id="PTHR11953">
    <property type="entry name" value="EXOSOME COMPLEX COMPONENT"/>
    <property type="match status" value="1"/>
</dbReference>
<dbReference type="PANTHER" id="PTHR11953:SF0">
    <property type="entry name" value="EXOSOME COMPLEX COMPONENT RRP41"/>
    <property type="match status" value="1"/>
</dbReference>
<dbReference type="Pfam" id="PF01138">
    <property type="entry name" value="RNase_PH"/>
    <property type="match status" value="1"/>
</dbReference>
<dbReference type="Pfam" id="PF03725">
    <property type="entry name" value="RNase_PH_C"/>
    <property type="match status" value="1"/>
</dbReference>
<dbReference type="SUPFAM" id="SSF55666">
    <property type="entry name" value="Ribonuclease PH domain 2-like"/>
    <property type="match status" value="1"/>
</dbReference>
<dbReference type="SUPFAM" id="SSF54211">
    <property type="entry name" value="Ribosomal protein S5 domain 2-like"/>
    <property type="match status" value="1"/>
</dbReference>
<dbReference type="PROSITE" id="PS01277">
    <property type="entry name" value="RIBONUCLEASE_PH"/>
    <property type="match status" value="1"/>
</dbReference>